<evidence type="ECO:0000255" key="1">
    <source>
        <dbReference type="HAMAP-Rule" id="MF_01177"/>
    </source>
</evidence>
<gene>
    <name evidence="1" type="primary">nsrR</name>
    <name type="ordered locus">SSON_4363</name>
</gene>
<sequence>MQLTSFTDYGLRALIYMASLPEGRMTSISEVTDVYGVSRNHMVKIINQLSRAGYVTAVRGKNGGIRLGKPASAIRIGDVVRELEPLSLVNCSSEFCHITPACRLKQALSKAVQSFLTELDNYTLADLVEENQPLYKLLLVE</sequence>
<keyword id="KW-0001">2Fe-2S</keyword>
<keyword id="KW-0238">DNA-binding</keyword>
<keyword id="KW-0408">Iron</keyword>
<keyword id="KW-0411">Iron-sulfur</keyword>
<keyword id="KW-0479">Metal-binding</keyword>
<keyword id="KW-1185">Reference proteome</keyword>
<keyword id="KW-0678">Repressor</keyword>
<keyword id="KW-0804">Transcription</keyword>
<keyword id="KW-0805">Transcription regulation</keyword>
<name>NSRR_SHISS</name>
<comment type="function">
    <text evidence="1">Nitric oxide-sensitive repressor of genes involved in protecting the cell against nitrosative stress. May require iron for activity.</text>
</comment>
<comment type="cofactor">
    <cofactor evidence="1">
        <name>[2Fe-2S] cluster</name>
        <dbReference type="ChEBI" id="CHEBI:190135"/>
    </cofactor>
    <text evidence="1">Binds 1 [2Fe-2S] cluster per subunit.</text>
</comment>
<dbReference type="EMBL" id="CP000038">
    <property type="protein sequence ID" value="AAZ90847.1"/>
    <property type="molecule type" value="Genomic_DNA"/>
</dbReference>
<dbReference type="RefSeq" id="WP_001177639.1">
    <property type="nucleotide sequence ID" value="NC_007384.1"/>
</dbReference>
<dbReference type="SMR" id="Q3YUG5"/>
<dbReference type="GeneID" id="93777643"/>
<dbReference type="KEGG" id="ssn:SSON_4363"/>
<dbReference type="HOGENOM" id="CLU_107144_2_1_6"/>
<dbReference type="Proteomes" id="UP000002529">
    <property type="component" value="Chromosome"/>
</dbReference>
<dbReference type="GO" id="GO:0005829">
    <property type="term" value="C:cytosol"/>
    <property type="evidence" value="ECO:0007669"/>
    <property type="project" value="TreeGrafter"/>
</dbReference>
<dbReference type="GO" id="GO:0051537">
    <property type="term" value="F:2 iron, 2 sulfur cluster binding"/>
    <property type="evidence" value="ECO:0007669"/>
    <property type="project" value="UniProtKB-KW"/>
</dbReference>
<dbReference type="GO" id="GO:0003700">
    <property type="term" value="F:DNA-binding transcription factor activity"/>
    <property type="evidence" value="ECO:0007669"/>
    <property type="project" value="UniProtKB-UniRule"/>
</dbReference>
<dbReference type="GO" id="GO:0003690">
    <property type="term" value="F:double-stranded DNA binding"/>
    <property type="evidence" value="ECO:0007669"/>
    <property type="project" value="UniProtKB-UniRule"/>
</dbReference>
<dbReference type="GO" id="GO:0005506">
    <property type="term" value="F:iron ion binding"/>
    <property type="evidence" value="ECO:0007669"/>
    <property type="project" value="UniProtKB-UniRule"/>
</dbReference>
<dbReference type="GO" id="GO:0045892">
    <property type="term" value="P:negative regulation of DNA-templated transcription"/>
    <property type="evidence" value="ECO:0007669"/>
    <property type="project" value="InterPro"/>
</dbReference>
<dbReference type="FunFam" id="1.10.10.10:FF:000105">
    <property type="entry name" value="HTH-type transcriptional repressor NsrR"/>
    <property type="match status" value="1"/>
</dbReference>
<dbReference type="Gene3D" id="1.10.10.10">
    <property type="entry name" value="Winged helix-like DNA-binding domain superfamily/Winged helix DNA-binding domain"/>
    <property type="match status" value="1"/>
</dbReference>
<dbReference type="HAMAP" id="MF_01177">
    <property type="entry name" value="HTH_type_NsrR"/>
    <property type="match status" value="1"/>
</dbReference>
<dbReference type="InterPro" id="IPR030489">
    <property type="entry name" value="TR_Rrf2-type_CS"/>
</dbReference>
<dbReference type="InterPro" id="IPR000944">
    <property type="entry name" value="Tscrpt_reg_Rrf2"/>
</dbReference>
<dbReference type="InterPro" id="IPR023761">
    <property type="entry name" value="Tscrpt_rep_HTH_NsrR"/>
</dbReference>
<dbReference type="InterPro" id="IPR036388">
    <property type="entry name" value="WH-like_DNA-bd_sf"/>
</dbReference>
<dbReference type="InterPro" id="IPR036390">
    <property type="entry name" value="WH_DNA-bd_sf"/>
</dbReference>
<dbReference type="NCBIfam" id="NF008240">
    <property type="entry name" value="PRK11014.1"/>
    <property type="match status" value="1"/>
</dbReference>
<dbReference type="NCBIfam" id="TIGR00738">
    <property type="entry name" value="rrf2_super"/>
    <property type="match status" value="1"/>
</dbReference>
<dbReference type="PANTHER" id="PTHR33221:SF4">
    <property type="entry name" value="HTH-TYPE TRANSCRIPTIONAL REPRESSOR NSRR"/>
    <property type="match status" value="1"/>
</dbReference>
<dbReference type="PANTHER" id="PTHR33221">
    <property type="entry name" value="WINGED HELIX-TURN-HELIX TRANSCRIPTIONAL REGULATOR, RRF2 FAMILY"/>
    <property type="match status" value="1"/>
</dbReference>
<dbReference type="Pfam" id="PF02082">
    <property type="entry name" value="Rrf2"/>
    <property type="match status" value="1"/>
</dbReference>
<dbReference type="SUPFAM" id="SSF46785">
    <property type="entry name" value="Winged helix' DNA-binding domain"/>
    <property type="match status" value="1"/>
</dbReference>
<dbReference type="PROSITE" id="PS01332">
    <property type="entry name" value="HTH_RRF2_1"/>
    <property type="match status" value="1"/>
</dbReference>
<dbReference type="PROSITE" id="PS51197">
    <property type="entry name" value="HTH_RRF2_2"/>
    <property type="match status" value="1"/>
</dbReference>
<protein>
    <recommendedName>
        <fullName evidence="1">HTH-type transcriptional repressor NsrR</fullName>
    </recommendedName>
</protein>
<reference key="1">
    <citation type="journal article" date="2005" name="Nucleic Acids Res.">
        <title>Genome dynamics and diversity of Shigella species, the etiologic agents of bacillary dysentery.</title>
        <authorList>
            <person name="Yang F."/>
            <person name="Yang J."/>
            <person name="Zhang X."/>
            <person name="Chen L."/>
            <person name="Jiang Y."/>
            <person name="Yan Y."/>
            <person name="Tang X."/>
            <person name="Wang J."/>
            <person name="Xiong Z."/>
            <person name="Dong J."/>
            <person name="Xue Y."/>
            <person name="Zhu Y."/>
            <person name="Xu X."/>
            <person name="Sun L."/>
            <person name="Chen S."/>
            <person name="Nie H."/>
            <person name="Peng J."/>
            <person name="Xu J."/>
            <person name="Wang Y."/>
            <person name="Yuan Z."/>
            <person name="Wen Y."/>
            <person name="Yao Z."/>
            <person name="Shen Y."/>
            <person name="Qiang B."/>
            <person name="Hou Y."/>
            <person name="Yu J."/>
            <person name="Jin Q."/>
        </authorList>
    </citation>
    <scope>NUCLEOTIDE SEQUENCE [LARGE SCALE GENOMIC DNA]</scope>
    <source>
        <strain>Ss046</strain>
    </source>
</reference>
<feature type="chain" id="PRO_0000268950" description="HTH-type transcriptional repressor NsrR">
    <location>
        <begin position="1"/>
        <end position="141"/>
    </location>
</feature>
<feature type="domain" description="HTH rrf2-type" evidence="1">
    <location>
        <begin position="2"/>
        <end position="129"/>
    </location>
</feature>
<feature type="DNA-binding region" description="H-T-H motif" evidence="1">
    <location>
        <begin position="28"/>
        <end position="51"/>
    </location>
</feature>
<feature type="binding site" evidence="1">
    <location>
        <position position="91"/>
    </location>
    <ligand>
        <name>[2Fe-2S] cluster</name>
        <dbReference type="ChEBI" id="CHEBI:190135"/>
    </ligand>
</feature>
<feature type="binding site" evidence="1">
    <location>
        <position position="96"/>
    </location>
    <ligand>
        <name>[2Fe-2S] cluster</name>
        <dbReference type="ChEBI" id="CHEBI:190135"/>
    </ligand>
</feature>
<feature type="binding site" evidence="1">
    <location>
        <position position="102"/>
    </location>
    <ligand>
        <name>[2Fe-2S] cluster</name>
        <dbReference type="ChEBI" id="CHEBI:190135"/>
    </ligand>
</feature>
<proteinExistence type="inferred from homology"/>
<organism>
    <name type="scientific">Shigella sonnei (strain Ss046)</name>
    <dbReference type="NCBI Taxonomy" id="300269"/>
    <lineage>
        <taxon>Bacteria</taxon>
        <taxon>Pseudomonadati</taxon>
        <taxon>Pseudomonadota</taxon>
        <taxon>Gammaproteobacteria</taxon>
        <taxon>Enterobacterales</taxon>
        <taxon>Enterobacteriaceae</taxon>
        <taxon>Shigella</taxon>
    </lineage>
</organism>
<accession>Q3YUG5</accession>